<name>MIAA_PSEP1</name>
<dbReference type="EC" id="2.5.1.75" evidence="1"/>
<dbReference type="EMBL" id="CP000712">
    <property type="protein sequence ID" value="ABQ80891.1"/>
    <property type="molecule type" value="Genomic_DNA"/>
</dbReference>
<dbReference type="SMR" id="A5W9T1"/>
<dbReference type="KEGG" id="ppf:Pput_4771"/>
<dbReference type="eggNOG" id="COG0324">
    <property type="taxonomic scope" value="Bacteria"/>
</dbReference>
<dbReference type="HOGENOM" id="CLU_032616_0_0_6"/>
<dbReference type="GO" id="GO:0005524">
    <property type="term" value="F:ATP binding"/>
    <property type="evidence" value="ECO:0007669"/>
    <property type="project" value="UniProtKB-UniRule"/>
</dbReference>
<dbReference type="GO" id="GO:0052381">
    <property type="term" value="F:tRNA dimethylallyltransferase activity"/>
    <property type="evidence" value="ECO:0007669"/>
    <property type="project" value="UniProtKB-UniRule"/>
</dbReference>
<dbReference type="GO" id="GO:0006400">
    <property type="term" value="P:tRNA modification"/>
    <property type="evidence" value="ECO:0007669"/>
    <property type="project" value="TreeGrafter"/>
</dbReference>
<dbReference type="FunFam" id="1.10.20.140:FF:000001">
    <property type="entry name" value="tRNA dimethylallyltransferase"/>
    <property type="match status" value="1"/>
</dbReference>
<dbReference type="Gene3D" id="1.10.20.140">
    <property type="match status" value="1"/>
</dbReference>
<dbReference type="Gene3D" id="3.40.50.300">
    <property type="entry name" value="P-loop containing nucleotide triphosphate hydrolases"/>
    <property type="match status" value="1"/>
</dbReference>
<dbReference type="HAMAP" id="MF_00185">
    <property type="entry name" value="IPP_trans"/>
    <property type="match status" value="1"/>
</dbReference>
<dbReference type="InterPro" id="IPR039657">
    <property type="entry name" value="Dimethylallyltransferase"/>
</dbReference>
<dbReference type="InterPro" id="IPR018022">
    <property type="entry name" value="IPT"/>
</dbReference>
<dbReference type="InterPro" id="IPR027417">
    <property type="entry name" value="P-loop_NTPase"/>
</dbReference>
<dbReference type="NCBIfam" id="TIGR00174">
    <property type="entry name" value="miaA"/>
    <property type="match status" value="1"/>
</dbReference>
<dbReference type="PANTHER" id="PTHR11088">
    <property type="entry name" value="TRNA DIMETHYLALLYLTRANSFERASE"/>
    <property type="match status" value="1"/>
</dbReference>
<dbReference type="PANTHER" id="PTHR11088:SF60">
    <property type="entry name" value="TRNA DIMETHYLALLYLTRANSFERASE"/>
    <property type="match status" value="1"/>
</dbReference>
<dbReference type="Pfam" id="PF01715">
    <property type="entry name" value="IPPT"/>
    <property type="match status" value="1"/>
</dbReference>
<dbReference type="SUPFAM" id="SSF52540">
    <property type="entry name" value="P-loop containing nucleoside triphosphate hydrolases"/>
    <property type="match status" value="1"/>
</dbReference>
<feature type="chain" id="PRO_1000020645" description="tRNA dimethylallyltransferase">
    <location>
        <begin position="1"/>
        <end position="323"/>
    </location>
</feature>
<feature type="region of interest" description="Interaction with substrate tRNA" evidence="1">
    <location>
        <begin position="37"/>
        <end position="40"/>
    </location>
</feature>
<feature type="region of interest" description="Interaction with substrate tRNA" evidence="1">
    <location>
        <begin position="161"/>
        <end position="165"/>
    </location>
</feature>
<feature type="binding site" evidence="1">
    <location>
        <begin position="12"/>
        <end position="19"/>
    </location>
    <ligand>
        <name>ATP</name>
        <dbReference type="ChEBI" id="CHEBI:30616"/>
    </ligand>
</feature>
<feature type="binding site" evidence="1">
    <location>
        <begin position="14"/>
        <end position="19"/>
    </location>
    <ligand>
        <name>substrate</name>
    </ligand>
</feature>
<feature type="site" description="Interaction with substrate tRNA" evidence="1">
    <location>
        <position position="103"/>
    </location>
</feature>
<feature type="site" description="Interaction with substrate tRNA" evidence="1">
    <location>
        <position position="125"/>
    </location>
</feature>
<organism>
    <name type="scientific">Pseudomonas putida (strain ATCC 700007 / DSM 6899 / JCM 31910 / BCRC 17059 / LMG 24140 / F1)</name>
    <dbReference type="NCBI Taxonomy" id="351746"/>
    <lineage>
        <taxon>Bacteria</taxon>
        <taxon>Pseudomonadati</taxon>
        <taxon>Pseudomonadota</taxon>
        <taxon>Gammaproteobacteria</taxon>
        <taxon>Pseudomonadales</taxon>
        <taxon>Pseudomonadaceae</taxon>
        <taxon>Pseudomonas</taxon>
    </lineage>
</organism>
<evidence type="ECO:0000255" key="1">
    <source>
        <dbReference type="HAMAP-Rule" id="MF_00185"/>
    </source>
</evidence>
<keyword id="KW-0067">ATP-binding</keyword>
<keyword id="KW-0460">Magnesium</keyword>
<keyword id="KW-0547">Nucleotide-binding</keyword>
<keyword id="KW-0808">Transferase</keyword>
<keyword id="KW-0819">tRNA processing</keyword>
<reference key="1">
    <citation type="submission" date="2007-05" db="EMBL/GenBank/DDBJ databases">
        <title>Complete sequence of Pseudomonas putida F1.</title>
        <authorList>
            <consortium name="US DOE Joint Genome Institute"/>
            <person name="Copeland A."/>
            <person name="Lucas S."/>
            <person name="Lapidus A."/>
            <person name="Barry K."/>
            <person name="Detter J.C."/>
            <person name="Glavina del Rio T."/>
            <person name="Hammon N."/>
            <person name="Israni S."/>
            <person name="Dalin E."/>
            <person name="Tice H."/>
            <person name="Pitluck S."/>
            <person name="Chain P."/>
            <person name="Malfatti S."/>
            <person name="Shin M."/>
            <person name="Vergez L."/>
            <person name="Schmutz J."/>
            <person name="Larimer F."/>
            <person name="Land M."/>
            <person name="Hauser L."/>
            <person name="Kyrpides N."/>
            <person name="Lykidis A."/>
            <person name="Parales R."/>
            <person name="Richardson P."/>
        </authorList>
    </citation>
    <scope>NUCLEOTIDE SEQUENCE [LARGE SCALE GENOMIC DNA]</scope>
    <source>
        <strain>ATCC 700007 / DSM 6899 / JCM 31910 / BCRC 17059 / LMG 24140 / F1</strain>
    </source>
</reference>
<accession>A5W9T1</accession>
<sequence>MSGKPPAIFLMGPTAAGKTDLAIELTTVLPCELISVDSALVYRGMDIGSAKPSKEVLAAHPHRLIDIRDPAQSYSAAQFRTDALEAMAEITARGKIPLLVGGTMLYYKALIDGLADMPAADATVRAELEAQAEALGLAELHRQLAEVDPESAARIHPNDPQRLIRALEVYRVSGESMTAHRRRQFAESRGADAGAGGHLPYTVASLAIAPTDRHILHQRIALRFSQMLEQGFVDEVRSLRARSDLHAGLPSIRAVGYRQVWDYLDGKLTENEMRERGIIATRQLAKRQFTWLRGWPDVHWLDSLACDNLSRTLKYLGAISILS</sequence>
<gene>
    <name evidence="1" type="primary">miaA</name>
    <name type="ordered locus">Pput_4771</name>
</gene>
<proteinExistence type="inferred from homology"/>
<comment type="function">
    <text evidence="1">Catalyzes the transfer of a dimethylallyl group onto the adenine at position 37 in tRNAs that read codons beginning with uridine, leading to the formation of N6-(dimethylallyl)adenosine (i(6)A).</text>
</comment>
<comment type="catalytic activity">
    <reaction evidence="1">
        <text>adenosine(37) in tRNA + dimethylallyl diphosphate = N(6)-dimethylallyladenosine(37) in tRNA + diphosphate</text>
        <dbReference type="Rhea" id="RHEA:26482"/>
        <dbReference type="Rhea" id="RHEA-COMP:10162"/>
        <dbReference type="Rhea" id="RHEA-COMP:10375"/>
        <dbReference type="ChEBI" id="CHEBI:33019"/>
        <dbReference type="ChEBI" id="CHEBI:57623"/>
        <dbReference type="ChEBI" id="CHEBI:74411"/>
        <dbReference type="ChEBI" id="CHEBI:74415"/>
        <dbReference type="EC" id="2.5.1.75"/>
    </reaction>
</comment>
<comment type="cofactor">
    <cofactor evidence="1">
        <name>Mg(2+)</name>
        <dbReference type="ChEBI" id="CHEBI:18420"/>
    </cofactor>
</comment>
<comment type="subunit">
    <text evidence="1">Monomer.</text>
</comment>
<comment type="similarity">
    <text evidence="1">Belongs to the IPP transferase family.</text>
</comment>
<protein>
    <recommendedName>
        <fullName evidence="1">tRNA dimethylallyltransferase</fullName>
        <ecNumber evidence="1">2.5.1.75</ecNumber>
    </recommendedName>
    <alternativeName>
        <fullName evidence="1">Dimethylallyl diphosphate:tRNA dimethylallyltransferase</fullName>
        <shortName evidence="1">DMAPP:tRNA dimethylallyltransferase</shortName>
        <shortName evidence="1">DMATase</shortName>
    </alternativeName>
    <alternativeName>
        <fullName evidence="1">Isopentenyl-diphosphate:tRNA isopentenyltransferase</fullName>
        <shortName evidence="1">IPP transferase</shortName>
        <shortName evidence="1">IPPT</shortName>
        <shortName evidence="1">IPTase</shortName>
    </alternativeName>
</protein>